<keyword id="KW-0235">DNA replication</keyword>
<keyword id="KW-0614">Plasmid</keyword>
<dbReference type="EMBL" id="M24251">
    <property type="protein sequence ID" value="AAA22187.1"/>
    <property type="molecule type" value="Genomic_DNA"/>
</dbReference>
<dbReference type="GO" id="GO:0003677">
    <property type="term" value="F:DNA binding"/>
    <property type="evidence" value="ECO:0007669"/>
    <property type="project" value="InterPro"/>
</dbReference>
<dbReference type="GO" id="GO:0006260">
    <property type="term" value="P:DNA replication"/>
    <property type="evidence" value="ECO:0007669"/>
    <property type="project" value="UniProtKB-KW"/>
</dbReference>
<dbReference type="InterPro" id="IPR000989">
    <property type="entry name" value="Rep"/>
</dbReference>
<dbReference type="Pfam" id="PF01446">
    <property type="entry name" value="Rep_1"/>
    <property type="match status" value="1"/>
</dbReference>
<sequence length="307" mass="36050">MAEHYEALESKIGAPYYAKKAEKLISCAEYLSFKRDPETGKLKLYQAHFCKVRLCPMCAWRRSLKIAYHNKLIVEEANRQYGCGWIFLTLTVRNVKGERLKPQISEMMEGFRKLFQYKKVKTSVLGFFRALEITKNHEEDTYHPHFHVLIPVRKNYFGKNYIKQAEWTSLWKKAMKLDYTPIVDIRRVKGKAKIDAELIENDVREAMMEQKAVLEISKYPVKDTDVVRGNKVTEDNLNTVLYLDDALAARRLIGYRGILKEIHKELNLGDAEDGDLVKIRKKMTRLQMVHLRLWLIGILHIKNYIIK</sequence>
<protein>
    <recommendedName>
        <fullName>Protein rep</fullName>
    </recommendedName>
    <alternativeName>
        <fullName>Replication protein</fullName>
    </alternativeName>
</protein>
<proteinExistence type="inferred from homology"/>
<organism>
    <name type="scientific">Bacillus sp</name>
    <dbReference type="NCBI Taxonomy" id="1409"/>
    <lineage>
        <taxon>Bacteria</taxon>
        <taxon>Bacillati</taxon>
        <taxon>Bacillota</taxon>
        <taxon>Bacilli</taxon>
        <taxon>Bacillales</taxon>
        <taxon>Bacillaceae</taxon>
        <taxon>Bacillus</taxon>
    </lineage>
</organism>
<comment type="similarity">
    <text evidence="2">Belongs to the Gram-positive plasmids replication protein type 1 family.</text>
</comment>
<name>REP_BACSP</name>
<reference key="1">
    <citation type="journal article" date="1989" name="J. Bacteriol.">
        <title>Replication and segregational stability of Bacillus plasmid pBAA1.</title>
        <authorList>
            <person name="Devine K.M."/>
            <person name="Hogan S.T."/>
            <person name="Higgins D.G."/>
            <person name="McConnell D.J."/>
        </authorList>
    </citation>
    <scope>NUCLEOTIDE SEQUENCE [GENOMIC DNA]</scope>
</reference>
<evidence type="ECO:0000250" key="1"/>
<evidence type="ECO:0000305" key="2"/>
<geneLocation type="plasmid">
    <name>pBAA1</name>
</geneLocation>
<gene>
    <name type="primary">repA</name>
</gene>
<feature type="chain" id="PRO_0000068312" description="Protein rep">
    <location>
        <begin position="1"/>
        <end position="307"/>
    </location>
</feature>
<feature type="binding site" evidence="1">
    <location>
        <position position="219"/>
    </location>
    <ligand>
        <name>DNA</name>
        <dbReference type="ChEBI" id="CHEBI:16991"/>
    </ligand>
</feature>
<accession>P36229</accession>